<sequence length="91" mass="10276">MAVKIRLKRMGANKSPFYRVVVADSRAPRDGRFIEQIGYYNPVAKPEAEVKLNEELALKWLAEGAKPSDTVRNLFSKAGIMEKFHNAKLAK</sequence>
<organism>
    <name type="scientific">Exiguobacterium sibiricum (strain DSM 17290 / CCUG 55495 / CIP 109462 / JCM 13490 / 255-15)</name>
    <dbReference type="NCBI Taxonomy" id="262543"/>
    <lineage>
        <taxon>Bacteria</taxon>
        <taxon>Bacillati</taxon>
        <taxon>Bacillota</taxon>
        <taxon>Bacilli</taxon>
        <taxon>Bacillales</taxon>
        <taxon>Bacillales Family XII. Incertae Sedis</taxon>
        <taxon>Exiguobacterium</taxon>
    </lineage>
</organism>
<feature type="chain" id="PRO_1000196407" description="Small ribosomal subunit protein bS16">
    <location>
        <begin position="1"/>
        <end position="91"/>
    </location>
</feature>
<accession>B1YIM6</accession>
<reference key="1">
    <citation type="submission" date="2008-04" db="EMBL/GenBank/DDBJ databases">
        <title>Complete sequence of chromosome of Exiguobacterium sibiricum 255-15.</title>
        <authorList>
            <consortium name="US DOE Joint Genome Institute"/>
            <person name="Copeland A."/>
            <person name="Lucas S."/>
            <person name="Lapidus A."/>
            <person name="Glavina del Rio T."/>
            <person name="Dalin E."/>
            <person name="Tice H."/>
            <person name="Bruce D."/>
            <person name="Goodwin L."/>
            <person name="Pitluck S."/>
            <person name="Kiss H."/>
            <person name="Chertkov O."/>
            <person name="Monk C."/>
            <person name="Brettin T."/>
            <person name="Detter J.C."/>
            <person name="Han C."/>
            <person name="Kuske C.R."/>
            <person name="Schmutz J."/>
            <person name="Larimer F."/>
            <person name="Land M."/>
            <person name="Hauser L."/>
            <person name="Kyrpides N."/>
            <person name="Mikhailova N."/>
            <person name="Vishnivetskaya T."/>
            <person name="Rodrigues D.F."/>
            <person name="Gilichinsky D."/>
            <person name="Tiedje J."/>
            <person name="Richardson P."/>
        </authorList>
    </citation>
    <scope>NUCLEOTIDE SEQUENCE [LARGE SCALE GENOMIC DNA]</scope>
    <source>
        <strain>DSM 17290 / CCUG 55495 / CIP 109462 / JCM 13490 / 255-15</strain>
    </source>
</reference>
<name>RS16_EXIS2</name>
<evidence type="ECO:0000255" key="1">
    <source>
        <dbReference type="HAMAP-Rule" id="MF_00385"/>
    </source>
</evidence>
<evidence type="ECO:0000305" key="2"/>
<keyword id="KW-1185">Reference proteome</keyword>
<keyword id="KW-0687">Ribonucleoprotein</keyword>
<keyword id="KW-0689">Ribosomal protein</keyword>
<proteinExistence type="inferred from homology"/>
<dbReference type="EMBL" id="CP001022">
    <property type="protein sequence ID" value="ACB61352.1"/>
    <property type="molecule type" value="Genomic_DNA"/>
</dbReference>
<dbReference type="RefSeq" id="WP_012370770.1">
    <property type="nucleotide sequence ID" value="NC_010556.1"/>
</dbReference>
<dbReference type="SMR" id="B1YIM6"/>
<dbReference type="STRING" id="262543.Exig_1900"/>
<dbReference type="KEGG" id="esi:Exig_1900"/>
<dbReference type="eggNOG" id="COG0228">
    <property type="taxonomic scope" value="Bacteria"/>
</dbReference>
<dbReference type="HOGENOM" id="CLU_100590_5_0_9"/>
<dbReference type="OrthoDB" id="9807878at2"/>
<dbReference type="Proteomes" id="UP000001681">
    <property type="component" value="Chromosome"/>
</dbReference>
<dbReference type="GO" id="GO:0005737">
    <property type="term" value="C:cytoplasm"/>
    <property type="evidence" value="ECO:0007669"/>
    <property type="project" value="UniProtKB-ARBA"/>
</dbReference>
<dbReference type="GO" id="GO:0015935">
    <property type="term" value="C:small ribosomal subunit"/>
    <property type="evidence" value="ECO:0007669"/>
    <property type="project" value="TreeGrafter"/>
</dbReference>
<dbReference type="GO" id="GO:0003735">
    <property type="term" value="F:structural constituent of ribosome"/>
    <property type="evidence" value="ECO:0007669"/>
    <property type="project" value="InterPro"/>
</dbReference>
<dbReference type="GO" id="GO:0006412">
    <property type="term" value="P:translation"/>
    <property type="evidence" value="ECO:0007669"/>
    <property type="project" value="UniProtKB-UniRule"/>
</dbReference>
<dbReference type="FunFam" id="3.30.1320.10:FF:000002">
    <property type="entry name" value="30S ribosomal protein S16"/>
    <property type="match status" value="1"/>
</dbReference>
<dbReference type="Gene3D" id="3.30.1320.10">
    <property type="match status" value="1"/>
</dbReference>
<dbReference type="HAMAP" id="MF_00385">
    <property type="entry name" value="Ribosomal_bS16"/>
    <property type="match status" value="1"/>
</dbReference>
<dbReference type="InterPro" id="IPR000307">
    <property type="entry name" value="Ribosomal_bS16"/>
</dbReference>
<dbReference type="InterPro" id="IPR020592">
    <property type="entry name" value="Ribosomal_bS16_CS"/>
</dbReference>
<dbReference type="InterPro" id="IPR023803">
    <property type="entry name" value="Ribosomal_bS16_dom_sf"/>
</dbReference>
<dbReference type="NCBIfam" id="TIGR00002">
    <property type="entry name" value="S16"/>
    <property type="match status" value="1"/>
</dbReference>
<dbReference type="PANTHER" id="PTHR12919">
    <property type="entry name" value="30S RIBOSOMAL PROTEIN S16"/>
    <property type="match status" value="1"/>
</dbReference>
<dbReference type="PANTHER" id="PTHR12919:SF20">
    <property type="entry name" value="SMALL RIBOSOMAL SUBUNIT PROTEIN BS16M"/>
    <property type="match status" value="1"/>
</dbReference>
<dbReference type="Pfam" id="PF00886">
    <property type="entry name" value="Ribosomal_S16"/>
    <property type="match status" value="1"/>
</dbReference>
<dbReference type="SUPFAM" id="SSF54565">
    <property type="entry name" value="Ribosomal protein S16"/>
    <property type="match status" value="1"/>
</dbReference>
<dbReference type="PROSITE" id="PS00732">
    <property type="entry name" value="RIBOSOMAL_S16"/>
    <property type="match status" value="1"/>
</dbReference>
<protein>
    <recommendedName>
        <fullName evidence="1">Small ribosomal subunit protein bS16</fullName>
    </recommendedName>
    <alternativeName>
        <fullName evidence="2">30S ribosomal protein S16</fullName>
    </alternativeName>
</protein>
<gene>
    <name evidence="1" type="primary">rpsP</name>
    <name type="ordered locus">Exig_1900</name>
</gene>
<comment type="similarity">
    <text evidence="1">Belongs to the bacterial ribosomal protein bS16 family.</text>
</comment>